<protein>
    <recommendedName>
        <fullName>Protein alan shepard</fullName>
    </recommendedName>
</protein>
<proteinExistence type="inferred from homology"/>
<organism>
    <name type="scientific">Drosophila grimshawi</name>
    <name type="common">Hawaiian fruit fly</name>
    <name type="synonym">Idiomyia grimshawi</name>
    <dbReference type="NCBI Taxonomy" id="7222"/>
    <lineage>
        <taxon>Eukaryota</taxon>
        <taxon>Metazoa</taxon>
        <taxon>Ecdysozoa</taxon>
        <taxon>Arthropoda</taxon>
        <taxon>Hexapoda</taxon>
        <taxon>Insecta</taxon>
        <taxon>Pterygota</taxon>
        <taxon>Neoptera</taxon>
        <taxon>Endopterygota</taxon>
        <taxon>Diptera</taxon>
        <taxon>Brachycera</taxon>
        <taxon>Muscomorpha</taxon>
        <taxon>Ephydroidea</taxon>
        <taxon>Drosophilidae</taxon>
        <taxon>Drosophila</taxon>
        <taxon>Hawaiian Drosophila</taxon>
    </lineage>
</organism>
<gene>
    <name evidence="1" type="primary">shep</name>
    <name type="ORF">GH15273</name>
</gene>
<keyword id="KW-0597">Phosphoprotein</keyword>
<keyword id="KW-1185">Reference proteome</keyword>
<keyword id="KW-0677">Repeat</keyword>
<keyword id="KW-0694">RNA-binding</keyword>
<accession>B4IX08</accession>
<name>SHEP_DROGR</name>
<feature type="chain" id="PRO_0000379498" description="Protein alan shepard">
    <location>
        <begin position="1"/>
        <end position="609"/>
    </location>
</feature>
<feature type="domain" description="RRM 1" evidence="2">
    <location>
        <begin position="257"/>
        <end position="330"/>
    </location>
</feature>
<feature type="domain" description="RRM 2" evidence="2">
    <location>
        <begin position="336"/>
        <end position="415"/>
    </location>
</feature>
<feature type="region of interest" description="Disordered" evidence="3">
    <location>
        <begin position="1"/>
        <end position="96"/>
    </location>
</feature>
<feature type="region of interest" description="Disordered" evidence="3">
    <location>
        <begin position="190"/>
        <end position="252"/>
    </location>
</feature>
<feature type="region of interest" description="Disordered" evidence="3">
    <location>
        <begin position="583"/>
        <end position="609"/>
    </location>
</feature>
<feature type="compositionally biased region" description="Pro residues" evidence="3">
    <location>
        <begin position="1"/>
        <end position="12"/>
    </location>
</feature>
<feature type="compositionally biased region" description="Low complexity" evidence="3">
    <location>
        <begin position="13"/>
        <end position="35"/>
    </location>
</feature>
<feature type="compositionally biased region" description="Gly residues" evidence="3">
    <location>
        <begin position="37"/>
        <end position="50"/>
    </location>
</feature>
<feature type="compositionally biased region" description="Low complexity" evidence="3">
    <location>
        <begin position="51"/>
        <end position="68"/>
    </location>
</feature>
<feature type="compositionally biased region" description="Low complexity" evidence="3">
    <location>
        <begin position="83"/>
        <end position="92"/>
    </location>
</feature>
<feature type="compositionally biased region" description="Low complexity" evidence="3">
    <location>
        <begin position="204"/>
        <end position="252"/>
    </location>
</feature>
<feature type="modified residue" description="Phosphotyrosine" evidence="1">
    <location>
        <position position="5"/>
    </location>
</feature>
<feature type="modified residue" description="Phosphotyrosine" evidence="1">
    <location>
        <position position="152"/>
    </location>
</feature>
<feature type="modified residue" description="Phosphotyrosine" evidence="1">
    <location>
        <position position="168"/>
    </location>
</feature>
<reference evidence="4" key="1">
    <citation type="journal article" date="2007" name="Nature">
        <title>Evolution of genes and genomes on the Drosophila phylogeny.</title>
        <authorList>
            <consortium name="Drosophila 12 genomes consortium"/>
        </authorList>
    </citation>
    <scope>NUCLEOTIDE SEQUENCE [LARGE SCALE GENOMIC DNA]</scope>
    <source>
        <strain evidence="4">Tucson 15287-2541.00</strain>
    </source>
</reference>
<evidence type="ECO:0000250" key="1">
    <source>
        <dbReference type="UniProtKB" id="Q8MSV2"/>
    </source>
</evidence>
<evidence type="ECO:0000255" key="2">
    <source>
        <dbReference type="PROSITE-ProRule" id="PRU00176"/>
    </source>
</evidence>
<evidence type="ECO:0000256" key="3">
    <source>
        <dbReference type="SAM" id="MobiDB-lite"/>
    </source>
</evidence>
<evidence type="ECO:0000312" key="4">
    <source>
        <dbReference type="EMBL" id="EDV96314.1"/>
    </source>
</evidence>
<sequence>MHPRYSPAPPPLHQQQQQQPPQQQQQQMGGPHQQQSGGVGPGTGHGGVGAAVGASNAGHMRAPPNSQQLPPPMPRSQNYANGSSSAASVAAAPPTPRSAFPGAPLTASAVALKGAIPQRPPAMTSPAAAAAGAALAAGAPYRGATSWTPQGYAPAAAAAAAAVAQQAYRYTAPLPQPAYAAYTPHTATTPATTTYGQRVPTAASPSNTNSSSSSNTGSQSGTLSTSLSNTTNTNTTMGPNGTAQNQNQQGGEQLSKTNLYIRGLQQGTTDKDLINMCAQYGTIISTKAILDKTTNKCKGYGFVDFEQPAYAEGAVKGLQAKGVQAQMAKQQEQDPTNLYIANLPPHFKETDLEAMLAKYGQVVSTRILRDQQMNSKGVGFARMESREKCEQIIQMFNGNTIPGAKDPLLVKFADGGPKKKNLFKTPDPSARAWRDVSAEGIPVAYDPSMQQNGVSVNVGTPIGVPYSRFGAPQVGGYPVAGSQWIPGYMMTQPITQVDDQYSSSALQYMQMAAAPQLGVTSYKPEAVNQVQPRGISMMVSGDTAVPYGTMMPQLATLQIGNSYISPTYPYYAPPPTIIPTMPMTDSEQASTAASPDEAYTQYPHQAAPK</sequence>
<comment type="function">
    <text evidence="1">Has a role in the perception of gravity.</text>
</comment>
<comment type="miscellaneous">
    <text>Named after Alan Bartlett Shepard, Jr. who was the second person and the first American in space and the fifth person to walk on the moon.</text>
</comment>
<dbReference type="EMBL" id="CH916366">
    <property type="protein sequence ID" value="EDV96314.1"/>
    <property type="molecule type" value="Genomic_DNA"/>
</dbReference>
<dbReference type="RefSeq" id="XP_001983966.1">
    <property type="nucleotide sequence ID" value="XM_001983930.1"/>
</dbReference>
<dbReference type="SMR" id="B4IX08"/>
<dbReference type="FunCoup" id="B4IX08">
    <property type="interactions" value="466"/>
</dbReference>
<dbReference type="STRING" id="7222.B4IX08"/>
<dbReference type="EnsemblMetazoa" id="FBtr0150687">
    <property type="protein sequence ID" value="FBpp0149179"/>
    <property type="gene ID" value="FBgn0122748"/>
</dbReference>
<dbReference type="EnsemblMetazoa" id="XM_043215653.1">
    <property type="protein sequence ID" value="XP_043071588.1"/>
    <property type="gene ID" value="LOC6558604"/>
</dbReference>
<dbReference type="eggNOG" id="KOG4733">
    <property type="taxonomic scope" value="Eukaryota"/>
</dbReference>
<dbReference type="HOGENOM" id="CLU_016278_1_1_1"/>
<dbReference type="InParanoid" id="B4IX08"/>
<dbReference type="OMA" id="FESPACA"/>
<dbReference type="OrthoDB" id="271725at2759"/>
<dbReference type="PhylomeDB" id="B4IX08"/>
<dbReference type="Proteomes" id="UP000001070">
    <property type="component" value="Unassembled WGS sequence"/>
</dbReference>
<dbReference type="GO" id="GO:1990904">
    <property type="term" value="C:ribonucleoprotein complex"/>
    <property type="evidence" value="ECO:0007669"/>
    <property type="project" value="InterPro"/>
</dbReference>
<dbReference type="GO" id="GO:0003723">
    <property type="term" value="F:RNA binding"/>
    <property type="evidence" value="ECO:0007669"/>
    <property type="project" value="UniProtKB-KW"/>
</dbReference>
<dbReference type="GO" id="GO:0009629">
    <property type="term" value="P:response to gravity"/>
    <property type="evidence" value="ECO:0000250"/>
    <property type="project" value="UniProtKB"/>
</dbReference>
<dbReference type="CDD" id="cd12244">
    <property type="entry name" value="RRM2_MSSP"/>
    <property type="match status" value="1"/>
</dbReference>
<dbReference type="FunFam" id="3.30.70.330:FF:000169">
    <property type="entry name" value="protein alan shepard isoform X4"/>
    <property type="match status" value="1"/>
</dbReference>
<dbReference type="FunFam" id="3.30.70.330:FF:000491">
    <property type="entry name" value="protein alan shepard isoform X6"/>
    <property type="match status" value="1"/>
</dbReference>
<dbReference type="Gene3D" id="3.30.70.330">
    <property type="match status" value="2"/>
</dbReference>
<dbReference type="InterPro" id="IPR002343">
    <property type="entry name" value="Hud_Sxl_RNA"/>
</dbReference>
<dbReference type="InterPro" id="IPR012677">
    <property type="entry name" value="Nucleotide-bd_a/b_plait_sf"/>
</dbReference>
<dbReference type="InterPro" id="IPR035979">
    <property type="entry name" value="RBD_domain_sf"/>
</dbReference>
<dbReference type="InterPro" id="IPR000504">
    <property type="entry name" value="RRM_dom"/>
</dbReference>
<dbReference type="PANTHER" id="PTHR24012">
    <property type="entry name" value="RNA BINDING PROTEIN"/>
    <property type="match status" value="1"/>
</dbReference>
<dbReference type="Pfam" id="PF00076">
    <property type="entry name" value="RRM_1"/>
    <property type="match status" value="2"/>
</dbReference>
<dbReference type="PRINTS" id="PR00961">
    <property type="entry name" value="HUDSXLRNA"/>
</dbReference>
<dbReference type="SMART" id="SM00360">
    <property type="entry name" value="RRM"/>
    <property type="match status" value="2"/>
</dbReference>
<dbReference type="SUPFAM" id="SSF54928">
    <property type="entry name" value="RNA-binding domain, RBD"/>
    <property type="match status" value="2"/>
</dbReference>
<dbReference type="PROSITE" id="PS50102">
    <property type="entry name" value="RRM"/>
    <property type="match status" value="2"/>
</dbReference>